<accession>Q47EP3</accession>
<name>DNAE2_DECAR</name>
<protein>
    <recommendedName>
        <fullName evidence="1">Error-prone DNA polymerase</fullName>
        <ecNumber evidence="1">2.7.7.7</ecNumber>
    </recommendedName>
</protein>
<gene>
    <name evidence="1" type="primary">dnaE2</name>
    <name type="ordered locus">Daro_1942</name>
</gene>
<dbReference type="EC" id="2.7.7.7" evidence="1"/>
<dbReference type="EMBL" id="CP000089">
    <property type="protein sequence ID" value="AAZ46688.1"/>
    <property type="molecule type" value="Genomic_DNA"/>
</dbReference>
<dbReference type="SMR" id="Q47EP3"/>
<dbReference type="STRING" id="159087.Daro_1942"/>
<dbReference type="KEGG" id="dar:Daro_1942"/>
<dbReference type="eggNOG" id="COG0587">
    <property type="taxonomic scope" value="Bacteria"/>
</dbReference>
<dbReference type="HOGENOM" id="CLU_001600_4_0_4"/>
<dbReference type="OrthoDB" id="9803237at2"/>
<dbReference type="GO" id="GO:0005737">
    <property type="term" value="C:cytoplasm"/>
    <property type="evidence" value="ECO:0007669"/>
    <property type="project" value="UniProtKB-SubCell"/>
</dbReference>
<dbReference type="GO" id="GO:0008408">
    <property type="term" value="F:3'-5' exonuclease activity"/>
    <property type="evidence" value="ECO:0007669"/>
    <property type="project" value="InterPro"/>
</dbReference>
<dbReference type="GO" id="GO:0003887">
    <property type="term" value="F:DNA-directed DNA polymerase activity"/>
    <property type="evidence" value="ECO:0007669"/>
    <property type="project" value="UniProtKB-UniRule"/>
</dbReference>
<dbReference type="GO" id="GO:0006281">
    <property type="term" value="P:DNA repair"/>
    <property type="evidence" value="ECO:0007669"/>
    <property type="project" value="UniProtKB-UniRule"/>
</dbReference>
<dbReference type="GO" id="GO:0006260">
    <property type="term" value="P:DNA replication"/>
    <property type="evidence" value="ECO:0007669"/>
    <property type="project" value="UniProtKB-KW"/>
</dbReference>
<dbReference type="CDD" id="cd04485">
    <property type="entry name" value="DnaE_OBF"/>
    <property type="match status" value="1"/>
</dbReference>
<dbReference type="CDD" id="cd07434">
    <property type="entry name" value="PHP_PolIIIA_DnaE2"/>
    <property type="match status" value="1"/>
</dbReference>
<dbReference type="Gene3D" id="1.10.150.870">
    <property type="match status" value="1"/>
</dbReference>
<dbReference type="Gene3D" id="3.20.20.140">
    <property type="entry name" value="Metal-dependent hydrolases"/>
    <property type="match status" value="1"/>
</dbReference>
<dbReference type="HAMAP" id="MF_01902">
    <property type="entry name" value="DNApol_error_prone"/>
    <property type="match status" value="1"/>
</dbReference>
<dbReference type="InterPro" id="IPR011708">
    <property type="entry name" value="DNA_pol3_alpha_NTPase_dom"/>
</dbReference>
<dbReference type="InterPro" id="IPR040982">
    <property type="entry name" value="DNA_pol3_finger"/>
</dbReference>
<dbReference type="InterPro" id="IPR023073">
    <property type="entry name" value="DnaE2"/>
</dbReference>
<dbReference type="InterPro" id="IPR004805">
    <property type="entry name" value="DnaE2/DnaE/PolC"/>
</dbReference>
<dbReference type="InterPro" id="IPR029460">
    <property type="entry name" value="DNAPol_HHH"/>
</dbReference>
<dbReference type="InterPro" id="IPR004013">
    <property type="entry name" value="PHP_dom"/>
</dbReference>
<dbReference type="InterPro" id="IPR003141">
    <property type="entry name" value="Pol/His_phosphatase_N"/>
</dbReference>
<dbReference type="InterPro" id="IPR016195">
    <property type="entry name" value="Pol/histidinol_Pase-like"/>
</dbReference>
<dbReference type="NCBIfam" id="TIGR00594">
    <property type="entry name" value="polc"/>
    <property type="match status" value="1"/>
</dbReference>
<dbReference type="NCBIfam" id="NF004225">
    <property type="entry name" value="PRK05672.1"/>
    <property type="match status" value="1"/>
</dbReference>
<dbReference type="PANTHER" id="PTHR32294">
    <property type="entry name" value="DNA POLYMERASE III SUBUNIT ALPHA"/>
    <property type="match status" value="1"/>
</dbReference>
<dbReference type="PANTHER" id="PTHR32294:SF4">
    <property type="entry name" value="ERROR-PRONE DNA POLYMERASE"/>
    <property type="match status" value="1"/>
</dbReference>
<dbReference type="Pfam" id="PF07733">
    <property type="entry name" value="DNA_pol3_alpha"/>
    <property type="match status" value="1"/>
</dbReference>
<dbReference type="Pfam" id="PF17657">
    <property type="entry name" value="DNA_pol3_finger"/>
    <property type="match status" value="1"/>
</dbReference>
<dbReference type="Pfam" id="PF14579">
    <property type="entry name" value="HHH_6"/>
    <property type="match status" value="1"/>
</dbReference>
<dbReference type="Pfam" id="PF02811">
    <property type="entry name" value="PHP"/>
    <property type="match status" value="1"/>
</dbReference>
<dbReference type="SMART" id="SM00481">
    <property type="entry name" value="POLIIIAc"/>
    <property type="match status" value="1"/>
</dbReference>
<dbReference type="SUPFAM" id="SSF89550">
    <property type="entry name" value="PHP domain-like"/>
    <property type="match status" value="1"/>
</dbReference>
<keyword id="KW-0963">Cytoplasm</keyword>
<keyword id="KW-0227">DNA damage</keyword>
<keyword id="KW-0234">DNA repair</keyword>
<keyword id="KW-0235">DNA replication</keyword>
<keyword id="KW-0239">DNA-directed DNA polymerase</keyword>
<keyword id="KW-0548">Nucleotidyltransferase</keyword>
<keyword id="KW-0808">Transferase</keyword>
<comment type="function">
    <text evidence="1">DNA polymerase involved in damage-induced mutagenesis and translesion synthesis (TLS). It is not the major replicative DNA polymerase.</text>
</comment>
<comment type="catalytic activity">
    <reaction evidence="1">
        <text>DNA(n) + a 2'-deoxyribonucleoside 5'-triphosphate = DNA(n+1) + diphosphate</text>
        <dbReference type="Rhea" id="RHEA:22508"/>
        <dbReference type="Rhea" id="RHEA-COMP:17339"/>
        <dbReference type="Rhea" id="RHEA-COMP:17340"/>
        <dbReference type="ChEBI" id="CHEBI:33019"/>
        <dbReference type="ChEBI" id="CHEBI:61560"/>
        <dbReference type="ChEBI" id="CHEBI:173112"/>
        <dbReference type="EC" id="2.7.7.7"/>
    </reaction>
</comment>
<comment type="subcellular location">
    <subcellularLocation>
        <location evidence="1">Cytoplasm</location>
    </subcellularLocation>
</comment>
<comment type="similarity">
    <text evidence="1">Belongs to the DNA polymerase type-C family. DnaE2 subfamily.</text>
</comment>
<reference key="1">
    <citation type="journal article" date="2009" name="BMC Genomics">
        <title>Metabolic analysis of the soil microbe Dechloromonas aromatica str. RCB: indications of a surprisingly complex life-style and cryptic anaerobic pathways for aromatic degradation.</title>
        <authorList>
            <person name="Salinero K.K."/>
            <person name="Keller K."/>
            <person name="Feil W.S."/>
            <person name="Feil H."/>
            <person name="Trong S."/>
            <person name="Di Bartolo G."/>
            <person name="Lapidus A."/>
        </authorList>
    </citation>
    <scope>NUCLEOTIDE SEQUENCE [LARGE SCALE GENOMIC DNA]</scope>
    <source>
        <strain>RCB</strain>
    </source>
</reference>
<organism>
    <name type="scientific">Dechloromonas aromatica (strain RCB)</name>
    <dbReference type="NCBI Taxonomy" id="159087"/>
    <lineage>
        <taxon>Bacteria</taxon>
        <taxon>Pseudomonadati</taxon>
        <taxon>Pseudomonadota</taxon>
        <taxon>Betaproteobacteria</taxon>
        <taxon>Rhodocyclales</taxon>
        <taxon>Azonexaceae</taxon>
        <taxon>Dechloromonas</taxon>
    </lineage>
</organism>
<sequence>MSLPEYAELHCLSNFSFLRGASHPEELAARALAQGYAALALTDECSLAGVVRAHLAAKKHGLKFIVGSEMMTVDGLKLVFLACNRHGYGNLSALITLARRRAEKGGYTLHRNDLESISPSGALPDCLVLWVPGNNPSSADGEWLVSRFPGRSWIAVELHAGPEDAERLAGLQSLGEVCGLPLVATGDVHMHIKARRPVQDVLTALRLKSTVFEAGYALFPNGERHLRSRLRLSRLYPPELLAETLNIAARCEFLLDELRYEYPEEIIPSGETPASWLRSETERGLQRRYPAGVPGSVRERIEHELGLIAEMAYEAYFLTVYDIVCYARSQDILCQGRGSAANSAVCYALGVTEVDPARSALLFERFVSKERGEPPDIDVDFEHERREDVIQYIYTKYGRERAALAAALITYRTKGALRDAGRALGFGIAQINALTASLAWWDKREQLPERFAELGLDPHAPRVEKWLAIAEALRGFPRHLTQHVGGFVISRGPLSRLVPVENAAMSARSVIQWDKDDLDAMGLMKVDILALGMLSAIRRMLQIVGETTGRPMKMQDIPAEDPATYEMLCHADSMGVFQVESRAQMAMLPRLRPQNFYDLVVEVALVRPGPIQGDMVHPYLKRRQGRERIEEISPAVDAVLERTYGVPIFQEQVMQLAVVAANFTPGEADQLRRAMAAWKRKGGLEPFEQKLLAGMAANDLPESFARRIIAQIQGFGEYGFPESHAASFALLVYASAWLKRHHPAAFLCGLLNSQPMGFYSPSMLIQDARRHGVRVLPPDVMTSDWDSRLDERGAVRLGLREISGFSVAAAKRITAVCRENQPFLNVADLAARAGLQRRDLDLLAAGDALQGLAGHRRQAAWAATVAVVQGDLFDGTPVVEAEIELPAPSDGENLVADYRSLGLTLRSHPLSLLRQYLAERRFVTAADLKMAGHHTLIRSVGIVVGRQRPGTATGIVFVTLEDETGLSNVVVHPQLVEKQRRELLGSTLLGVYGQLQVEGEVVHLVAKRLVDLSAWLGRLETVSRDFH</sequence>
<evidence type="ECO:0000255" key="1">
    <source>
        <dbReference type="HAMAP-Rule" id="MF_01902"/>
    </source>
</evidence>
<proteinExistence type="inferred from homology"/>
<feature type="chain" id="PRO_1000070590" description="Error-prone DNA polymerase">
    <location>
        <begin position="1"/>
        <end position="1027"/>
    </location>
</feature>